<reference key="1">
    <citation type="journal article" date="2000" name="Nature">
        <title>The genome sequence of the plant pathogen Xylella fastidiosa.</title>
        <authorList>
            <person name="Simpson A.J.G."/>
            <person name="Reinach F.C."/>
            <person name="Arruda P."/>
            <person name="Abreu F.A."/>
            <person name="Acencio M."/>
            <person name="Alvarenga R."/>
            <person name="Alves L.M.C."/>
            <person name="Araya J.E."/>
            <person name="Baia G.S."/>
            <person name="Baptista C.S."/>
            <person name="Barros M.H."/>
            <person name="Bonaccorsi E.D."/>
            <person name="Bordin S."/>
            <person name="Bove J.M."/>
            <person name="Briones M.R.S."/>
            <person name="Bueno M.R.P."/>
            <person name="Camargo A.A."/>
            <person name="Camargo L.E.A."/>
            <person name="Carraro D.M."/>
            <person name="Carrer H."/>
            <person name="Colauto N.B."/>
            <person name="Colombo C."/>
            <person name="Costa F.F."/>
            <person name="Costa M.C.R."/>
            <person name="Costa-Neto C.M."/>
            <person name="Coutinho L.L."/>
            <person name="Cristofani M."/>
            <person name="Dias-Neto E."/>
            <person name="Docena C."/>
            <person name="El-Dorry H."/>
            <person name="Facincani A.P."/>
            <person name="Ferreira A.J.S."/>
            <person name="Ferreira V.C.A."/>
            <person name="Ferro J.A."/>
            <person name="Fraga J.S."/>
            <person name="Franca S.C."/>
            <person name="Franco M.C."/>
            <person name="Frohme M."/>
            <person name="Furlan L.R."/>
            <person name="Garnier M."/>
            <person name="Goldman G.H."/>
            <person name="Goldman M.H.S."/>
            <person name="Gomes S.L."/>
            <person name="Gruber A."/>
            <person name="Ho P.L."/>
            <person name="Hoheisel J.D."/>
            <person name="Junqueira M.L."/>
            <person name="Kemper E.L."/>
            <person name="Kitajima J.P."/>
            <person name="Krieger J.E."/>
            <person name="Kuramae E.E."/>
            <person name="Laigret F."/>
            <person name="Lambais M.R."/>
            <person name="Leite L.C.C."/>
            <person name="Lemos E.G.M."/>
            <person name="Lemos M.V.F."/>
            <person name="Lopes S.A."/>
            <person name="Lopes C.R."/>
            <person name="Machado J.A."/>
            <person name="Machado M.A."/>
            <person name="Madeira A.M.B.N."/>
            <person name="Madeira H.M.F."/>
            <person name="Marino C.L."/>
            <person name="Marques M.V."/>
            <person name="Martins E.A.L."/>
            <person name="Martins E.M.F."/>
            <person name="Matsukuma A.Y."/>
            <person name="Menck C.F.M."/>
            <person name="Miracca E.C."/>
            <person name="Miyaki C.Y."/>
            <person name="Monteiro-Vitorello C.B."/>
            <person name="Moon D.H."/>
            <person name="Nagai M.A."/>
            <person name="Nascimento A.L.T.O."/>
            <person name="Netto L.E.S."/>
            <person name="Nhani A. Jr."/>
            <person name="Nobrega F.G."/>
            <person name="Nunes L.R."/>
            <person name="Oliveira M.A."/>
            <person name="de Oliveira M.C."/>
            <person name="de Oliveira R.C."/>
            <person name="Palmieri D.A."/>
            <person name="Paris A."/>
            <person name="Peixoto B.R."/>
            <person name="Pereira G.A.G."/>
            <person name="Pereira H.A. Jr."/>
            <person name="Pesquero J.B."/>
            <person name="Quaggio R.B."/>
            <person name="Roberto P.G."/>
            <person name="Rodrigues V."/>
            <person name="de Rosa A.J.M."/>
            <person name="de Rosa V.E. Jr."/>
            <person name="de Sa R.G."/>
            <person name="Santelli R.V."/>
            <person name="Sawasaki H.E."/>
            <person name="da Silva A.C.R."/>
            <person name="da Silva A.M."/>
            <person name="da Silva F.R."/>
            <person name="Silva W.A. Jr."/>
            <person name="da Silveira J.F."/>
            <person name="Silvestri M.L.Z."/>
            <person name="Siqueira W.J."/>
            <person name="de Souza A.A."/>
            <person name="de Souza A.P."/>
            <person name="Terenzi M.F."/>
            <person name="Truffi D."/>
            <person name="Tsai S.M."/>
            <person name="Tsuhako M.H."/>
            <person name="Vallada H."/>
            <person name="Van Sluys M.A."/>
            <person name="Verjovski-Almeida S."/>
            <person name="Vettore A.L."/>
            <person name="Zago M.A."/>
            <person name="Zatz M."/>
            <person name="Meidanis J."/>
            <person name="Setubal J.C."/>
        </authorList>
    </citation>
    <scope>NUCLEOTIDE SEQUENCE [LARGE SCALE GENOMIC DNA]</scope>
    <source>
        <strain>9a5c</strain>
    </source>
</reference>
<comment type="function">
    <text evidence="1">Catalyzes the reductive methylation of 2'-deoxyuridine-5'-monophosphate (dUMP) to 2'-deoxythymidine-5'-monophosphate (dTMP) while utilizing 5,10-methylenetetrahydrofolate (mTHF) as the methyl donor and reductant in the reaction, yielding dihydrofolate (DHF) as a by-product. This enzymatic reaction provides an intracellular de novo source of dTMP, an essential precursor for DNA biosynthesis.</text>
</comment>
<comment type="catalytic activity">
    <reaction evidence="1">
        <text>dUMP + (6R)-5,10-methylene-5,6,7,8-tetrahydrofolate = 7,8-dihydrofolate + dTMP</text>
        <dbReference type="Rhea" id="RHEA:12104"/>
        <dbReference type="ChEBI" id="CHEBI:15636"/>
        <dbReference type="ChEBI" id="CHEBI:57451"/>
        <dbReference type="ChEBI" id="CHEBI:63528"/>
        <dbReference type="ChEBI" id="CHEBI:246422"/>
        <dbReference type="EC" id="2.1.1.45"/>
    </reaction>
</comment>
<comment type="pathway">
    <text evidence="1">Pyrimidine metabolism; dTTP biosynthesis.</text>
</comment>
<comment type="subunit">
    <text evidence="1">Homodimer.</text>
</comment>
<comment type="subcellular location">
    <subcellularLocation>
        <location evidence="1">Cytoplasm</location>
    </subcellularLocation>
</comment>
<comment type="similarity">
    <text evidence="1">Belongs to the thymidylate synthase family. Bacterial-type ThyA subfamily.</text>
</comment>
<dbReference type="EC" id="2.1.1.45" evidence="1"/>
<dbReference type="EMBL" id="AE003849">
    <property type="protein sequence ID" value="AAF85131.1"/>
    <property type="molecule type" value="Genomic_DNA"/>
</dbReference>
<dbReference type="PIR" id="G82569">
    <property type="entry name" value="G82569"/>
</dbReference>
<dbReference type="RefSeq" id="WP_010894778.1">
    <property type="nucleotide sequence ID" value="NC_002488.3"/>
</dbReference>
<dbReference type="SMR" id="Q9PB13"/>
<dbReference type="STRING" id="160492.XF_2332"/>
<dbReference type="KEGG" id="xfa:XF_2332"/>
<dbReference type="eggNOG" id="COG0207">
    <property type="taxonomic scope" value="Bacteria"/>
</dbReference>
<dbReference type="HOGENOM" id="CLU_021669_0_0_6"/>
<dbReference type="UniPathway" id="UPA00575"/>
<dbReference type="Proteomes" id="UP000000812">
    <property type="component" value="Chromosome"/>
</dbReference>
<dbReference type="GO" id="GO:0005829">
    <property type="term" value="C:cytosol"/>
    <property type="evidence" value="ECO:0007669"/>
    <property type="project" value="TreeGrafter"/>
</dbReference>
<dbReference type="GO" id="GO:0004799">
    <property type="term" value="F:thymidylate synthase activity"/>
    <property type="evidence" value="ECO:0007669"/>
    <property type="project" value="UniProtKB-UniRule"/>
</dbReference>
<dbReference type="GO" id="GO:0006231">
    <property type="term" value="P:dTMP biosynthetic process"/>
    <property type="evidence" value="ECO:0007669"/>
    <property type="project" value="UniProtKB-UniRule"/>
</dbReference>
<dbReference type="GO" id="GO:0006235">
    <property type="term" value="P:dTTP biosynthetic process"/>
    <property type="evidence" value="ECO:0007669"/>
    <property type="project" value="UniProtKB-UniRule"/>
</dbReference>
<dbReference type="GO" id="GO:0032259">
    <property type="term" value="P:methylation"/>
    <property type="evidence" value="ECO:0007669"/>
    <property type="project" value="UniProtKB-KW"/>
</dbReference>
<dbReference type="CDD" id="cd00351">
    <property type="entry name" value="TS_Pyrimidine_HMase"/>
    <property type="match status" value="1"/>
</dbReference>
<dbReference type="FunFam" id="3.30.572.10:FF:000001">
    <property type="entry name" value="Thymidylate synthase"/>
    <property type="match status" value="1"/>
</dbReference>
<dbReference type="Gene3D" id="3.30.572.10">
    <property type="entry name" value="Thymidylate synthase/dCMP hydroxymethylase domain"/>
    <property type="match status" value="1"/>
</dbReference>
<dbReference type="HAMAP" id="MF_00008">
    <property type="entry name" value="Thymidy_synth_bact"/>
    <property type="match status" value="1"/>
</dbReference>
<dbReference type="InterPro" id="IPR045097">
    <property type="entry name" value="Thymidate_synth/dCMP_Mease"/>
</dbReference>
<dbReference type="InterPro" id="IPR023451">
    <property type="entry name" value="Thymidate_synth/dCMP_Mease_dom"/>
</dbReference>
<dbReference type="InterPro" id="IPR036926">
    <property type="entry name" value="Thymidate_synth/dCMP_Mease_sf"/>
</dbReference>
<dbReference type="InterPro" id="IPR000398">
    <property type="entry name" value="Thymidylate_synthase"/>
</dbReference>
<dbReference type="InterPro" id="IPR020940">
    <property type="entry name" value="Thymidylate_synthase_AS"/>
</dbReference>
<dbReference type="NCBIfam" id="NF002497">
    <property type="entry name" value="PRK01827.1-3"/>
    <property type="match status" value="1"/>
</dbReference>
<dbReference type="NCBIfam" id="NF002499">
    <property type="entry name" value="PRK01827.1-5"/>
    <property type="match status" value="1"/>
</dbReference>
<dbReference type="NCBIfam" id="TIGR03284">
    <property type="entry name" value="thym_sym"/>
    <property type="match status" value="2"/>
</dbReference>
<dbReference type="PANTHER" id="PTHR11548:SF9">
    <property type="entry name" value="THYMIDYLATE SYNTHASE"/>
    <property type="match status" value="1"/>
</dbReference>
<dbReference type="PANTHER" id="PTHR11548">
    <property type="entry name" value="THYMIDYLATE SYNTHASE 1"/>
    <property type="match status" value="1"/>
</dbReference>
<dbReference type="Pfam" id="PF00303">
    <property type="entry name" value="Thymidylat_synt"/>
    <property type="match status" value="1"/>
</dbReference>
<dbReference type="PRINTS" id="PR00108">
    <property type="entry name" value="THYMDSNTHASE"/>
</dbReference>
<dbReference type="SUPFAM" id="SSF55831">
    <property type="entry name" value="Thymidylate synthase/dCMP hydroxymethylase"/>
    <property type="match status" value="1"/>
</dbReference>
<dbReference type="PROSITE" id="PS00091">
    <property type="entry name" value="THYMIDYLATE_SYNTHASE"/>
    <property type="match status" value="1"/>
</dbReference>
<keyword id="KW-0963">Cytoplasm</keyword>
<keyword id="KW-0489">Methyltransferase</keyword>
<keyword id="KW-0545">Nucleotide biosynthesis</keyword>
<keyword id="KW-0808">Transferase</keyword>
<organism>
    <name type="scientific">Xylella fastidiosa (strain 9a5c)</name>
    <dbReference type="NCBI Taxonomy" id="160492"/>
    <lineage>
        <taxon>Bacteria</taxon>
        <taxon>Pseudomonadati</taxon>
        <taxon>Pseudomonadota</taxon>
        <taxon>Gammaproteobacteria</taxon>
        <taxon>Lysobacterales</taxon>
        <taxon>Lysobacteraceae</taxon>
        <taxon>Xylella</taxon>
    </lineage>
</organism>
<name>TYSY_XYLFA</name>
<sequence>MKQYLELLNDVLVHGIQKPDRTGTGTRSVFGWQMRFDLSQGFPLVTTKKLHLRSIIHELLWFLRGETNIAYLKKHQVHIWDEWADATGELGPVYGKQWRRWAGADGHEIDQIRWLLEEIKRNPDSRRLVISAWNVADLPQMALVPCHALFQFYVANGKLSCQLYQRSADIFLGVPFNIASYALLTHMLAQVTGLAVGDFVHTLGDAHLYANHVEQASVQLERVPRPQPVLMLNPAVTDLFDFTYDDIVIEGYDPYPAIKAPVAV</sequence>
<gene>
    <name evidence="1" type="primary">thyA</name>
    <name type="ordered locus">XF_2332</name>
</gene>
<accession>Q9PB13</accession>
<protein>
    <recommendedName>
        <fullName evidence="1">Thymidylate synthase</fullName>
        <shortName evidence="1">TS</shortName>
        <shortName evidence="1">TSase</shortName>
        <ecNumber evidence="1">2.1.1.45</ecNumber>
    </recommendedName>
</protein>
<proteinExistence type="inferred from homology"/>
<evidence type="ECO:0000255" key="1">
    <source>
        <dbReference type="HAMAP-Rule" id="MF_00008"/>
    </source>
</evidence>
<feature type="chain" id="PRO_0000141049" description="Thymidylate synthase">
    <location>
        <begin position="1"/>
        <end position="264"/>
    </location>
</feature>
<feature type="active site" description="Nucleophile" evidence="1">
    <location>
        <position position="146"/>
    </location>
</feature>
<feature type="binding site" description="in other chain" evidence="1">
    <location>
        <position position="21"/>
    </location>
    <ligand>
        <name>dUMP</name>
        <dbReference type="ChEBI" id="CHEBI:246422"/>
        <note>ligand shared between dimeric partners</note>
    </ligand>
</feature>
<feature type="binding site" evidence="1">
    <location>
        <position position="51"/>
    </location>
    <ligand>
        <name>(6R)-5,10-methylene-5,6,7,8-tetrahydrofolate</name>
        <dbReference type="ChEBI" id="CHEBI:15636"/>
    </ligand>
</feature>
<feature type="binding site" evidence="1">
    <location>
        <begin position="126"/>
        <end position="127"/>
    </location>
    <ligand>
        <name>dUMP</name>
        <dbReference type="ChEBI" id="CHEBI:246422"/>
        <note>ligand shared between dimeric partners</note>
    </ligand>
</feature>
<feature type="binding site" description="in other chain" evidence="1">
    <location>
        <begin position="166"/>
        <end position="169"/>
    </location>
    <ligand>
        <name>dUMP</name>
        <dbReference type="ChEBI" id="CHEBI:246422"/>
        <note>ligand shared between dimeric partners</note>
    </ligand>
</feature>
<feature type="binding site" evidence="1">
    <location>
        <position position="169"/>
    </location>
    <ligand>
        <name>(6R)-5,10-methylene-5,6,7,8-tetrahydrofolate</name>
        <dbReference type="ChEBI" id="CHEBI:15636"/>
    </ligand>
</feature>
<feature type="binding site" description="in other chain" evidence="1">
    <location>
        <position position="177"/>
    </location>
    <ligand>
        <name>dUMP</name>
        <dbReference type="ChEBI" id="CHEBI:246422"/>
        <note>ligand shared between dimeric partners</note>
    </ligand>
</feature>
<feature type="binding site" description="in other chain" evidence="1">
    <location>
        <begin position="207"/>
        <end position="209"/>
    </location>
    <ligand>
        <name>dUMP</name>
        <dbReference type="ChEBI" id="CHEBI:246422"/>
        <note>ligand shared between dimeric partners</note>
    </ligand>
</feature>
<feature type="binding site" evidence="1">
    <location>
        <position position="263"/>
    </location>
    <ligand>
        <name>(6R)-5,10-methylene-5,6,7,8-tetrahydrofolate</name>
        <dbReference type="ChEBI" id="CHEBI:15636"/>
    </ligand>
</feature>